<keyword id="KW-0210">Decarboxylase</keyword>
<keyword id="KW-0456">Lyase</keyword>
<keyword id="KW-0620">Polyamine biosynthesis</keyword>
<keyword id="KW-0670">Pyruvate</keyword>
<keyword id="KW-1185">Reference proteome</keyword>
<keyword id="KW-0949">S-adenosyl-L-methionine</keyword>
<keyword id="KW-0704">Schiff base</keyword>
<keyword id="KW-0745">Spermidine biosynthesis</keyword>
<keyword id="KW-0865">Zymogen</keyword>
<protein>
    <recommendedName>
        <fullName evidence="5">S-adenosylmethionine decarboxylase proenzyme 4</fullName>
        <shortName evidence="5">AdoMetDC4</shortName>
        <ecNumber evidence="2">4.1.1.50</ecNumber>
    </recommendedName>
    <component>
        <recommendedName>
            <fullName evidence="1">S-adenosylmethionine decarboxylase 1 alpha chain</fullName>
        </recommendedName>
    </component>
    <component>
        <recommendedName>
            <fullName evidence="1">S-adenosylmethionine decarboxylase 1 beta chain</fullName>
        </recommendedName>
        <alternativeName>
            <fullName evidence="4">Protein BUSHY AND DWARF 2</fullName>
        </alternativeName>
    </component>
</protein>
<reference key="1">
    <citation type="journal article" date="2006" name="Cell Res.">
        <title>BUD2, encoding an S-adenosylmethionine decarboxylase, is required for Arabidopsis growth and development.</title>
        <authorList>
            <person name="Ge C."/>
            <person name="Cui X."/>
            <person name="Wang Y."/>
            <person name="Hu Y."/>
            <person name="Fu Z."/>
            <person name="Zhang D."/>
            <person name="Cheng Z."/>
            <person name="Li J."/>
        </authorList>
    </citation>
    <scope>NUCLEOTIDE SEQUENCE [MRNA]</scope>
    <scope>FUNCTION</scope>
    <scope>CATALYTIC ACTIVITY</scope>
    <scope>DISRUPTION PHENOTYPE</scope>
    <scope>GENE FAMILY</scope>
</reference>
<reference key="2">
    <citation type="journal article" date="2000" name="Nature">
        <title>Sequence and analysis of chromosome 5 of the plant Arabidopsis thaliana.</title>
        <authorList>
            <person name="Tabata S."/>
            <person name="Kaneko T."/>
            <person name="Nakamura Y."/>
            <person name="Kotani H."/>
            <person name="Kato T."/>
            <person name="Asamizu E."/>
            <person name="Miyajima N."/>
            <person name="Sasamoto S."/>
            <person name="Kimura T."/>
            <person name="Hosouchi T."/>
            <person name="Kawashima K."/>
            <person name="Kohara M."/>
            <person name="Matsumoto M."/>
            <person name="Matsuno A."/>
            <person name="Muraki A."/>
            <person name="Nakayama S."/>
            <person name="Nakazaki N."/>
            <person name="Naruo K."/>
            <person name="Okumura S."/>
            <person name="Shinpo S."/>
            <person name="Takeuchi C."/>
            <person name="Wada T."/>
            <person name="Watanabe A."/>
            <person name="Yamada M."/>
            <person name="Yasuda M."/>
            <person name="Sato S."/>
            <person name="de la Bastide M."/>
            <person name="Huang E."/>
            <person name="Spiegel L."/>
            <person name="Gnoj L."/>
            <person name="O'Shaughnessy A."/>
            <person name="Preston R."/>
            <person name="Habermann K."/>
            <person name="Murray J."/>
            <person name="Johnson D."/>
            <person name="Rohlfing T."/>
            <person name="Nelson J."/>
            <person name="Stoneking T."/>
            <person name="Pepin K."/>
            <person name="Spieth J."/>
            <person name="Sekhon M."/>
            <person name="Armstrong J."/>
            <person name="Becker M."/>
            <person name="Belter E."/>
            <person name="Cordum H."/>
            <person name="Cordes M."/>
            <person name="Courtney L."/>
            <person name="Courtney W."/>
            <person name="Dante M."/>
            <person name="Du H."/>
            <person name="Edwards J."/>
            <person name="Fryman J."/>
            <person name="Haakensen B."/>
            <person name="Lamar E."/>
            <person name="Latreille P."/>
            <person name="Leonard S."/>
            <person name="Meyer R."/>
            <person name="Mulvaney E."/>
            <person name="Ozersky P."/>
            <person name="Riley A."/>
            <person name="Strowmatt C."/>
            <person name="Wagner-McPherson C."/>
            <person name="Wollam A."/>
            <person name="Yoakum M."/>
            <person name="Bell M."/>
            <person name="Dedhia N."/>
            <person name="Parnell L."/>
            <person name="Shah R."/>
            <person name="Rodriguez M."/>
            <person name="Hoon See L."/>
            <person name="Vil D."/>
            <person name="Baker J."/>
            <person name="Kirchoff K."/>
            <person name="Toth K."/>
            <person name="King L."/>
            <person name="Bahret A."/>
            <person name="Miller B."/>
            <person name="Marra M.A."/>
            <person name="Martienssen R."/>
            <person name="McCombie W.R."/>
            <person name="Wilson R.K."/>
            <person name="Murphy G."/>
            <person name="Bancroft I."/>
            <person name="Volckaert G."/>
            <person name="Wambutt R."/>
            <person name="Duesterhoeft A."/>
            <person name="Stiekema W."/>
            <person name="Pohl T."/>
            <person name="Entian K.-D."/>
            <person name="Terryn N."/>
            <person name="Hartley N."/>
            <person name="Bent E."/>
            <person name="Johnson S."/>
            <person name="Langham S.-A."/>
            <person name="McCullagh B."/>
            <person name="Robben J."/>
            <person name="Grymonprez B."/>
            <person name="Zimmermann W."/>
            <person name="Ramsperger U."/>
            <person name="Wedler H."/>
            <person name="Balke K."/>
            <person name="Wedler E."/>
            <person name="Peters S."/>
            <person name="van Staveren M."/>
            <person name="Dirkse W."/>
            <person name="Mooijman P."/>
            <person name="Klein Lankhorst R."/>
            <person name="Weitzenegger T."/>
            <person name="Bothe G."/>
            <person name="Rose M."/>
            <person name="Hauf J."/>
            <person name="Berneiser S."/>
            <person name="Hempel S."/>
            <person name="Feldpausch M."/>
            <person name="Lamberth S."/>
            <person name="Villarroel R."/>
            <person name="Gielen J."/>
            <person name="Ardiles W."/>
            <person name="Bents O."/>
            <person name="Lemcke K."/>
            <person name="Kolesov G."/>
            <person name="Mayer K.F.X."/>
            <person name="Rudd S."/>
            <person name="Schoof H."/>
            <person name="Schueller C."/>
            <person name="Zaccaria P."/>
            <person name="Mewes H.-W."/>
            <person name="Bevan M."/>
            <person name="Fransz P.F."/>
        </authorList>
    </citation>
    <scope>NUCLEOTIDE SEQUENCE [LARGE SCALE GENOMIC DNA]</scope>
    <scope>GENOME REANNOTATION</scope>
    <source>
        <strain>cv. Columbia</strain>
    </source>
</reference>
<reference key="3">
    <citation type="journal article" date="2017" name="Plant J.">
        <title>Araport11: a complete reannotation of the Arabidopsis thaliana reference genome.</title>
        <authorList>
            <person name="Cheng C.Y."/>
            <person name="Krishnakumar V."/>
            <person name="Chan A.P."/>
            <person name="Thibaud-Nissen F."/>
            <person name="Schobel S."/>
            <person name="Town C.D."/>
        </authorList>
    </citation>
    <scope>GENOME REANNOTATION</scope>
    <source>
        <strain>cv. Columbia</strain>
    </source>
</reference>
<reference key="4">
    <citation type="journal article" date="2010" name="Cell Res.">
        <title>The BUD2 mutation affects plant architecture through altering cytokinin and auxin responses in Arabidopsis.</title>
        <authorList>
            <person name="Cui X."/>
            <person name="Ge C."/>
            <person name="Wang R."/>
            <person name="Wang H."/>
            <person name="Chen W."/>
            <person name="Fu Z."/>
            <person name="Jiang X."/>
            <person name="Li J."/>
            <person name="Wang Y."/>
        </authorList>
    </citation>
    <scope>INDUCTION BY AUXIN</scope>
    <scope>DISRUPTION PHENOTYPE</scope>
</reference>
<feature type="chain" id="PRO_0000430962" description="S-adenosylmethionine decarboxylase 1 beta chain" evidence="1">
    <location>
        <begin position="1"/>
        <end position="66"/>
    </location>
</feature>
<feature type="chain" id="PRO_0000430963" description="S-adenosylmethionine decarboxylase 1 alpha chain" evidence="1">
    <location>
        <begin position="67"/>
        <end position="347"/>
    </location>
</feature>
<feature type="active site" evidence="1">
    <location>
        <position position="7"/>
    </location>
</feature>
<feature type="active site" evidence="1">
    <location>
        <position position="10"/>
    </location>
</feature>
<feature type="active site" description="Schiff-base intermediate with substrate; via pyruvic acid" evidence="1">
    <location>
        <position position="67"/>
    </location>
</feature>
<feature type="active site" description="Proton donor; for catalytic activity" evidence="1">
    <location>
        <position position="81"/>
    </location>
</feature>
<feature type="active site" description="Proton acceptor; for processing activity" evidence="1">
    <location>
        <position position="237"/>
    </location>
</feature>
<feature type="active site" description="Proton acceptor; for processing activity" evidence="1">
    <location>
        <position position="250"/>
    </location>
</feature>
<feature type="binding site" evidence="1">
    <location>
        <position position="66"/>
    </location>
    <ligand>
        <name>substrate</name>
    </ligand>
</feature>
<feature type="binding site" evidence="1">
    <location>
        <position position="254"/>
    </location>
    <ligand>
        <name>substrate</name>
    </ligand>
</feature>
<feature type="site" description="Cleavage (non-hydrolytic); by autolysis" evidence="1">
    <location>
        <begin position="66"/>
        <end position="67"/>
    </location>
</feature>
<feature type="modified residue" description="Pyruvic acid (Ser); by autocatalysis" evidence="1">
    <location>
        <position position="67"/>
    </location>
</feature>
<accession>Q3E9D5</accession>
<sequence length="347" mass="39039">MAVSGFEGFEKRLELRFFDDDKPITKNPMGLRLIDFESLDQVLNEVQCTVVSAVANRSFDAYVLSESSLFVYPTKIIIKTCGTTQLLKSIRPLIHLARNLGLTLRACRYSRGSFIFPKAQPFPYTSFKDEVIVVEESLPKSLCYRKASVMTPSNNPSRAWHVFTASADVESDEHVVVVEVCMTELDRVNARSFFKRKGDEKNNSDSAGKEMTRLSGIDNINANAYICDFAFDPCGYSMNGVDGDRYSTIHVTPEDGFSYASFECGLSLYDNGHEDISEVLSRAIDVFRPSDVSIATTYGGEDYNHEVTKRVERVLAKKLDLKCRSRLMDEFPGSGTVVYQSFTPRRK</sequence>
<gene>
    <name evidence="4" type="primary">SAMDC4</name>
    <name evidence="4" type="synonym">BUD2</name>
    <name evidence="6" type="ordered locus">At5g18930</name>
</gene>
<comment type="function">
    <text evidence="2">Essential for biosynthesis of the polyamines spermidine and spermine. Essential for polyamine homeostasis, and normal plant embryogenesis, growth and development.</text>
</comment>
<comment type="catalytic activity">
    <reaction evidence="2">
        <text>S-adenosyl-L-methionine + H(+) = S-adenosyl 3-(methylsulfanyl)propylamine + CO2</text>
        <dbReference type="Rhea" id="RHEA:15981"/>
        <dbReference type="ChEBI" id="CHEBI:15378"/>
        <dbReference type="ChEBI" id="CHEBI:16526"/>
        <dbReference type="ChEBI" id="CHEBI:57443"/>
        <dbReference type="ChEBI" id="CHEBI:59789"/>
        <dbReference type="EC" id="4.1.1.50"/>
    </reaction>
</comment>
<comment type="cofactor">
    <cofactor evidence="1">
        <name>pyruvate</name>
        <dbReference type="ChEBI" id="CHEBI:15361"/>
    </cofactor>
    <text evidence="1">Binds 1 pyruvoyl group covalently per subunit.</text>
</comment>
<comment type="pathway">
    <text evidence="5">Amine and polyamine biosynthesis; S-adenosylmethioninamine biosynthesis; S-adenosylmethioninamine from S-adenosyl-L-methionine: step 1/1.</text>
</comment>
<comment type="interaction">
    <interactant intactId="EBI-25512418">
        <id>Q3E9D5</id>
    </interactant>
    <interactant intactId="EBI-4451150">
        <id>P11035</id>
        <label>NIA2</label>
    </interactant>
    <organismsDiffer>false</organismsDiffer>
    <experiments>5</experiments>
</comment>
<comment type="interaction">
    <interactant intactId="EBI-25512418">
        <id>Q3E9D5</id>
    </interactant>
    <interactant intactId="EBI-8519814">
        <id>P29448</id>
        <label>TRX1</label>
    </interactant>
    <organismsDiffer>false</organismsDiffer>
    <experiments>3</experiments>
</comment>
<comment type="interaction">
    <interactant intactId="EBI-25512418">
        <id>Q3E9D5</id>
    </interactant>
    <interactant intactId="EBI-727983">
        <id>Q38879</id>
        <label>TRX2</label>
    </interactant>
    <organismsDiffer>false</organismsDiffer>
    <experiments>3</experiments>
</comment>
<comment type="interaction">
    <interactant intactId="EBI-25512418">
        <id>Q3E9D5</id>
    </interactant>
    <interactant intactId="EBI-4466064">
        <id>Q9C9Y6</id>
        <label>TRX9</label>
    </interactant>
    <organismsDiffer>false</organismsDiffer>
    <experiments>3</experiments>
</comment>
<comment type="induction">
    <text evidence="3">By auxin.</text>
</comment>
<comment type="PTM">
    <text evidence="1">Is synthesized initially as an inactive proenzyme. Formation of the active enzyme involves a self-maturation process in which the active site pyruvoyl group is generated from an internal serine residue via an autocatalytic post-translational modification. Two non-identical subunits are generated from the proenzyme in this reaction, and the pyruvate is formed at the N-terminus of the alpha chain, which is derived from the carboxyl end of the proenzyme. The post-translation cleavage follows an unusual pathway, termed non-hydrolytic serinolysis, in which the side chain hydroxyl group of the serine supplies its oxygen atom to form the C-terminus of the beta chain, while the remainder of the serine residue undergoes an oxidative deamination to produce ammonia and the pyruvoyl group blocking the N-terminus of the alpha chain (By similarity).</text>
</comment>
<comment type="disruption phenotype">
    <text evidence="2 3">Reduction in the length of stem internodes. Increased thickness of veins in leaves and inflorescence stems. Altered morphology of xylem vessel elements. Altered homeostasis of polyamines. Hyposensitivity to auxin and hypersensitivity to cytokinin. The double mutants of bud2-1 and samdc1-1 are embryonic lethal.</text>
</comment>
<comment type="similarity">
    <text evidence="5">Belongs to the eukaryotic AdoMetDC family.</text>
</comment>
<name>DCAM4_ARATH</name>
<proteinExistence type="evidence at protein level"/>
<organism>
    <name type="scientific">Arabidopsis thaliana</name>
    <name type="common">Mouse-ear cress</name>
    <dbReference type="NCBI Taxonomy" id="3702"/>
    <lineage>
        <taxon>Eukaryota</taxon>
        <taxon>Viridiplantae</taxon>
        <taxon>Streptophyta</taxon>
        <taxon>Embryophyta</taxon>
        <taxon>Tracheophyta</taxon>
        <taxon>Spermatophyta</taxon>
        <taxon>Magnoliopsida</taxon>
        <taxon>eudicotyledons</taxon>
        <taxon>Gunneridae</taxon>
        <taxon>Pentapetalae</taxon>
        <taxon>rosids</taxon>
        <taxon>malvids</taxon>
        <taxon>Brassicales</taxon>
        <taxon>Brassicaceae</taxon>
        <taxon>Camelineae</taxon>
        <taxon>Arabidopsis</taxon>
    </lineage>
</organism>
<evidence type="ECO:0000250" key="1">
    <source>
        <dbReference type="UniProtKB" id="P17707"/>
    </source>
</evidence>
<evidence type="ECO:0000269" key="2">
    <source>
    </source>
</evidence>
<evidence type="ECO:0000269" key="3">
    <source>
    </source>
</evidence>
<evidence type="ECO:0000303" key="4">
    <source>
    </source>
</evidence>
<evidence type="ECO:0000305" key="5"/>
<evidence type="ECO:0000312" key="6">
    <source>
        <dbReference type="Araport" id="AT5G18930"/>
    </source>
</evidence>
<dbReference type="EC" id="4.1.1.50" evidence="2"/>
<dbReference type="EMBL" id="DQ217414">
    <property type="protein sequence ID" value="ABB20589.1"/>
    <property type="molecule type" value="mRNA"/>
</dbReference>
<dbReference type="EMBL" id="AC068655">
    <property type="status" value="NOT_ANNOTATED_CDS"/>
    <property type="molecule type" value="Genomic_DNA"/>
</dbReference>
<dbReference type="EMBL" id="CP002688">
    <property type="protein sequence ID" value="AED92629.1"/>
    <property type="molecule type" value="Genomic_DNA"/>
</dbReference>
<dbReference type="RefSeq" id="NP_197394.1">
    <property type="nucleotide sequence ID" value="NM_121898.3"/>
</dbReference>
<dbReference type="SMR" id="Q3E9D5"/>
<dbReference type="BioGRID" id="17287">
    <property type="interactions" value="4"/>
</dbReference>
<dbReference type="FunCoup" id="Q3E9D5">
    <property type="interactions" value="2244"/>
</dbReference>
<dbReference type="IntAct" id="Q3E9D5">
    <property type="interactions" value="4"/>
</dbReference>
<dbReference type="STRING" id="3702.Q3E9D5"/>
<dbReference type="PaxDb" id="3702-AT5G18930.1"/>
<dbReference type="ProteomicsDB" id="222196"/>
<dbReference type="EnsemblPlants" id="AT5G18930.1">
    <property type="protein sequence ID" value="AT5G18930.1"/>
    <property type="gene ID" value="AT5G18930"/>
</dbReference>
<dbReference type="GeneID" id="832011"/>
<dbReference type="Gramene" id="AT5G18930.1">
    <property type="protein sequence ID" value="AT5G18930.1"/>
    <property type="gene ID" value="AT5G18930"/>
</dbReference>
<dbReference type="KEGG" id="ath:AT5G18930"/>
<dbReference type="Araport" id="AT5G18930"/>
<dbReference type="TAIR" id="AT5G18930">
    <property type="gene designation" value="BUD2"/>
</dbReference>
<dbReference type="eggNOG" id="KOG0788">
    <property type="taxonomic scope" value="Eukaryota"/>
</dbReference>
<dbReference type="HOGENOM" id="CLU_023050_1_0_1"/>
<dbReference type="InParanoid" id="Q3E9D5"/>
<dbReference type="OMA" id="WFEESSN"/>
<dbReference type="OrthoDB" id="1068353at2759"/>
<dbReference type="PhylomeDB" id="Q3E9D5"/>
<dbReference type="BioCyc" id="ARA:AT5G18930-MONOMER"/>
<dbReference type="BRENDA" id="4.1.1.50">
    <property type="organism ID" value="399"/>
</dbReference>
<dbReference type="UniPathway" id="UPA00331">
    <property type="reaction ID" value="UER00451"/>
</dbReference>
<dbReference type="PRO" id="PR:Q3E9D5"/>
<dbReference type="Proteomes" id="UP000006548">
    <property type="component" value="Chromosome 5"/>
</dbReference>
<dbReference type="ExpressionAtlas" id="Q3E9D5">
    <property type="expression patterns" value="baseline and differential"/>
</dbReference>
<dbReference type="GO" id="GO:0004014">
    <property type="term" value="F:adenosylmethionine decarboxylase activity"/>
    <property type="evidence" value="ECO:0000314"/>
    <property type="project" value="UniProtKB"/>
</dbReference>
<dbReference type="GO" id="GO:0099402">
    <property type="term" value="P:plant organ development"/>
    <property type="evidence" value="ECO:0000315"/>
    <property type="project" value="UniProtKB"/>
</dbReference>
<dbReference type="GO" id="GO:0008295">
    <property type="term" value="P:spermidine biosynthetic process"/>
    <property type="evidence" value="ECO:0000315"/>
    <property type="project" value="UniProtKB"/>
</dbReference>
<dbReference type="GO" id="GO:0006597">
    <property type="term" value="P:spermine biosynthetic process"/>
    <property type="evidence" value="ECO:0000315"/>
    <property type="project" value="UniProtKB"/>
</dbReference>
<dbReference type="FunFam" id="3.30.360.50:FF:000001">
    <property type="entry name" value="S-adenosylmethionine decarboxylase proenzyme"/>
    <property type="match status" value="1"/>
</dbReference>
<dbReference type="FunFam" id="3.60.90.10:FF:000002">
    <property type="entry name" value="S-adenosylmethionine decarboxylase proenzyme"/>
    <property type="match status" value="1"/>
</dbReference>
<dbReference type="Gene3D" id="3.30.360.50">
    <property type="entry name" value="S-adenosylmethionine decarboxylase"/>
    <property type="match status" value="1"/>
</dbReference>
<dbReference type="Gene3D" id="3.60.90.10">
    <property type="entry name" value="S-adenosylmethionine decarboxylase"/>
    <property type="match status" value="1"/>
</dbReference>
<dbReference type="InterPro" id="IPR048283">
    <property type="entry name" value="AdoMetDC-like"/>
</dbReference>
<dbReference type="InterPro" id="IPR001985">
    <property type="entry name" value="S-AdoMet_decarboxylase_euk"/>
</dbReference>
<dbReference type="InterPro" id="IPR016067">
    <property type="entry name" value="S-AdoMet_deCO2ase_core"/>
</dbReference>
<dbReference type="InterPro" id="IPR018166">
    <property type="entry name" value="S-AdoMet_deCO2ase_CS"/>
</dbReference>
<dbReference type="NCBIfam" id="TIGR00535">
    <property type="entry name" value="SAM_DCase"/>
    <property type="match status" value="1"/>
</dbReference>
<dbReference type="PANTHER" id="PTHR11570">
    <property type="entry name" value="S-ADENOSYLMETHIONINE DECARBOXYLASE"/>
    <property type="match status" value="1"/>
</dbReference>
<dbReference type="PANTHER" id="PTHR11570:SF38">
    <property type="entry name" value="S-ADENOSYLMETHIONINE DECARBOXYLASE PROENZYME 4"/>
    <property type="match status" value="1"/>
</dbReference>
<dbReference type="Pfam" id="PF01536">
    <property type="entry name" value="SAM_decarbox"/>
    <property type="match status" value="1"/>
</dbReference>
<dbReference type="PIRSF" id="PIRSF001355">
    <property type="entry name" value="S-AdenosylMet_decarboxylase"/>
    <property type="match status" value="1"/>
</dbReference>
<dbReference type="SUPFAM" id="SSF56276">
    <property type="entry name" value="S-adenosylmethionine decarboxylase"/>
    <property type="match status" value="1"/>
</dbReference>
<dbReference type="PROSITE" id="PS01336">
    <property type="entry name" value="ADOMETDC"/>
    <property type="match status" value="1"/>
</dbReference>